<organism>
    <name type="scientific">Anser anser anser</name>
    <name type="common">Western greylag goose</name>
    <dbReference type="NCBI Taxonomy" id="8844"/>
    <lineage>
        <taxon>Eukaryota</taxon>
        <taxon>Metazoa</taxon>
        <taxon>Chordata</taxon>
        <taxon>Craniata</taxon>
        <taxon>Vertebrata</taxon>
        <taxon>Euteleostomi</taxon>
        <taxon>Archelosauria</taxon>
        <taxon>Archosauria</taxon>
        <taxon>Dinosauria</taxon>
        <taxon>Saurischia</taxon>
        <taxon>Theropoda</taxon>
        <taxon>Coelurosauria</taxon>
        <taxon>Aves</taxon>
        <taxon>Neognathae</taxon>
        <taxon>Galloanserae</taxon>
        <taxon>Anseriformes</taxon>
        <taxon>Anatidae</taxon>
        <taxon>Anserinae</taxon>
        <taxon>Anser</taxon>
    </lineage>
</organism>
<gene>
    <name type="primary">HBAA</name>
</gene>
<sequence>MVLSAADKTNVKGVFSKIGGHAEEYGAETLERMFTAYPQTKTYFPHFDLQHGSAQIKAHGKKVAAALVEAVNHIDDIAGALSKLSDLHAQKLRVDPVNFKFLGHCFLVVVAIHHPSALTPEVHASLDKFLCAVGTVLTAKYR</sequence>
<accession>P01989</accession>
<protein>
    <recommendedName>
        <fullName>Hemoglobin subunit alpha-A</fullName>
    </recommendedName>
    <alternativeName>
        <fullName>Alpha-A-globin</fullName>
    </alternativeName>
    <alternativeName>
        <fullName>Hemoglobin alpha-A chain</fullName>
    </alternativeName>
</protein>
<proteinExistence type="evidence at protein level"/>
<name>HBA_ANSAN</name>
<reference key="1">
    <citation type="journal article" date="1981" name="Hoppe-Seyler's Z. Physiol. Chem.">
        <title>Hemoglobins, XLII. Studies on the hemoglobin of the greylag goose (Anser anser). The primary structures of the alpha- and beta-chains of the main component.</title>
        <authorList>
            <person name="Oberthur W."/>
            <person name="Braunitzer G."/>
            <person name="Kalas S."/>
        </authorList>
    </citation>
    <scope>PROTEIN SEQUENCE OF 2-142</scope>
</reference>
<reference key="2">
    <citation type="journal article" date="2001" name="Acta Crystallogr. D">
        <title>The structure of greylag goose oxy haemoglobin: the roles of four mutations compared with bar-headed goose haemoglobin.</title>
        <authorList>
            <person name="Liang Y.H."/>
            <person name="Liu X.Z."/>
            <person name="Liu S.H."/>
            <person name="Lu G.Y."/>
        </authorList>
    </citation>
    <scope>X-RAY CRYSTALLOGRAPHY (3.09 ANGSTROMS)</scope>
</reference>
<feature type="initiator methionine" description="Removed" evidence="1">
    <location>
        <position position="1"/>
    </location>
</feature>
<feature type="chain" id="PRO_0000052551" description="Hemoglobin subunit alpha-A">
    <location>
        <begin position="2"/>
        <end position="142"/>
    </location>
</feature>
<feature type="domain" description="Globin" evidence="2">
    <location>
        <begin position="2"/>
        <end position="142"/>
    </location>
</feature>
<feature type="binding site" evidence="2">
    <location>
        <position position="59"/>
    </location>
    <ligand>
        <name>O2</name>
        <dbReference type="ChEBI" id="CHEBI:15379"/>
    </ligand>
</feature>
<feature type="binding site" description="proximal binding residue" evidence="2">
    <location>
        <position position="88"/>
    </location>
    <ligand>
        <name>heme b</name>
        <dbReference type="ChEBI" id="CHEBI:60344"/>
    </ligand>
    <ligandPart>
        <name>Fe</name>
        <dbReference type="ChEBI" id="CHEBI:18248"/>
    </ligandPart>
</feature>
<feature type="helix" evidence="3">
    <location>
        <begin position="5"/>
        <end position="16"/>
    </location>
</feature>
<feature type="helix" evidence="3">
    <location>
        <begin position="19"/>
        <end position="21"/>
    </location>
</feature>
<feature type="helix" evidence="3">
    <location>
        <begin position="22"/>
        <end position="36"/>
    </location>
</feature>
<feature type="helix" evidence="3">
    <location>
        <begin position="38"/>
        <end position="43"/>
    </location>
</feature>
<feature type="helix" evidence="3">
    <location>
        <begin position="54"/>
        <end position="71"/>
    </location>
</feature>
<feature type="helix" evidence="3">
    <location>
        <begin position="74"/>
        <end position="76"/>
    </location>
</feature>
<feature type="turn" evidence="3">
    <location>
        <begin position="77"/>
        <end position="81"/>
    </location>
</feature>
<feature type="helix" evidence="3">
    <location>
        <begin position="82"/>
        <end position="89"/>
    </location>
</feature>
<feature type="helix" evidence="3">
    <location>
        <begin position="97"/>
        <end position="113"/>
    </location>
</feature>
<feature type="helix" evidence="3">
    <location>
        <begin position="115"/>
        <end position="117"/>
    </location>
</feature>
<feature type="helix" evidence="3">
    <location>
        <begin position="120"/>
        <end position="137"/>
    </location>
</feature>
<feature type="helix" evidence="3">
    <location>
        <begin position="138"/>
        <end position="141"/>
    </location>
</feature>
<dbReference type="PIR" id="A02310">
    <property type="entry name" value="HAGS"/>
</dbReference>
<dbReference type="PDB" id="1FAW">
    <property type="method" value="X-ray"/>
    <property type="resolution" value="3.09 A"/>
    <property type="chains" value="A/C=2-142"/>
</dbReference>
<dbReference type="PDBsum" id="1FAW"/>
<dbReference type="SMR" id="P01989"/>
<dbReference type="EvolutionaryTrace" id="P01989"/>
<dbReference type="GO" id="GO:0072562">
    <property type="term" value="C:blood microparticle"/>
    <property type="evidence" value="ECO:0007669"/>
    <property type="project" value="TreeGrafter"/>
</dbReference>
<dbReference type="GO" id="GO:0031838">
    <property type="term" value="C:haptoglobin-hemoglobin complex"/>
    <property type="evidence" value="ECO:0007669"/>
    <property type="project" value="TreeGrafter"/>
</dbReference>
<dbReference type="GO" id="GO:0005833">
    <property type="term" value="C:hemoglobin complex"/>
    <property type="evidence" value="ECO:0007669"/>
    <property type="project" value="InterPro"/>
</dbReference>
<dbReference type="GO" id="GO:0031720">
    <property type="term" value="F:haptoglobin binding"/>
    <property type="evidence" value="ECO:0007669"/>
    <property type="project" value="TreeGrafter"/>
</dbReference>
<dbReference type="GO" id="GO:0020037">
    <property type="term" value="F:heme binding"/>
    <property type="evidence" value="ECO:0007669"/>
    <property type="project" value="InterPro"/>
</dbReference>
<dbReference type="GO" id="GO:0005506">
    <property type="term" value="F:iron ion binding"/>
    <property type="evidence" value="ECO:0007669"/>
    <property type="project" value="InterPro"/>
</dbReference>
<dbReference type="GO" id="GO:0043177">
    <property type="term" value="F:organic acid binding"/>
    <property type="evidence" value="ECO:0007669"/>
    <property type="project" value="TreeGrafter"/>
</dbReference>
<dbReference type="GO" id="GO:0019825">
    <property type="term" value="F:oxygen binding"/>
    <property type="evidence" value="ECO:0007669"/>
    <property type="project" value="InterPro"/>
</dbReference>
<dbReference type="GO" id="GO:0005344">
    <property type="term" value="F:oxygen carrier activity"/>
    <property type="evidence" value="ECO:0007669"/>
    <property type="project" value="UniProtKB-KW"/>
</dbReference>
<dbReference type="GO" id="GO:0004601">
    <property type="term" value="F:peroxidase activity"/>
    <property type="evidence" value="ECO:0007669"/>
    <property type="project" value="TreeGrafter"/>
</dbReference>
<dbReference type="GO" id="GO:0042744">
    <property type="term" value="P:hydrogen peroxide catabolic process"/>
    <property type="evidence" value="ECO:0007669"/>
    <property type="project" value="TreeGrafter"/>
</dbReference>
<dbReference type="CDD" id="cd08927">
    <property type="entry name" value="Hb-alpha-like"/>
    <property type="match status" value="1"/>
</dbReference>
<dbReference type="FunFam" id="1.10.490.10:FF:000002">
    <property type="entry name" value="Hemoglobin subunit alpha"/>
    <property type="match status" value="1"/>
</dbReference>
<dbReference type="Gene3D" id="1.10.490.10">
    <property type="entry name" value="Globins"/>
    <property type="match status" value="1"/>
</dbReference>
<dbReference type="InterPro" id="IPR000971">
    <property type="entry name" value="Globin"/>
</dbReference>
<dbReference type="InterPro" id="IPR009050">
    <property type="entry name" value="Globin-like_sf"/>
</dbReference>
<dbReference type="InterPro" id="IPR012292">
    <property type="entry name" value="Globin/Proto"/>
</dbReference>
<dbReference type="InterPro" id="IPR002338">
    <property type="entry name" value="Hemoglobin_a-typ"/>
</dbReference>
<dbReference type="InterPro" id="IPR050056">
    <property type="entry name" value="Hemoglobin_oxygen_transport"/>
</dbReference>
<dbReference type="InterPro" id="IPR002339">
    <property type="entry name" value="Hemoglobin_pi"/>
</dbReference>
<dbReference type="PANTHER" id="PTHR11442">
    <property type="entry name" value="HEMOGLOBIN FAMILY MEMBER"/>
    <property type="match status" value="1"/>
</dbReference>
<dbReference type="PANTHER" id="PTHR11442:SF48">
    <property type="entry name" value="HEMOGLOBIN SUBUNIT ALPHA"/>
    <property type="match status" value="1"/>
</dbReference>
<dbReference type="Pfam" id="PF00042">
    <property type="entry name" value="Globin"/>
    <property type="match status" value="1"/>
</dbReference>
<dbReference type="PRINTS" id="PR00612">
    <property type="entry name" value="ALPHAHAEM"/>
</dbReference>
<dbReference type="PRINTS" id="PR00815">
    <property type="entry name" value="PIHAEM"/>
</dbReference>
<dbReference type="SUPFAM" id="SSF46458">
    <property type="entry name" value="Globin-like"/>
    <property type="match status" value="1"/>
</dbReference>
<dbReference type="PROSITE" id="PS01033">
    <property type="entry name" value="GLOBIN"/>
    <property type="match status" value="1"/>
</dbReference>
<keyword id="KW-0002">3D-structure</keyword>
<keyword id="KW-0903">Direct protein sequencing</keyword>
<keyword id="KW-0349">Heme</keyword>
<keyword id="KW-0408">Iron</keyword>
<keyword id="KW-0479">Metal-binding</keyword>
<keyword id="KW-0561">Oxygen transport</keyword>
<keyword id="KW-0813">Transport</keyword>
<comment type="function">
    <text>Involved in oxygen transport from the lung to the various peripheral tissues.</text>
</comment>
<comment type="subunit">
    <text>Heterotetramer of two alpha chains and two beta chains.</text>
</comment>
<comment type="tissue specificity">
    <text>Red blood cells.</text>
</comment>
<comment type="similarity">
    <text evidence="2">Belongs to the globin family.</text>
</comment>
<evidence type="ECO:0000250" key="1"/>
<evidence type="ECO:0000255" key="2">
    <source>
        <dbReference type="PROSITE-ProRule" id="PRU00238"/>
    </source>
</evidence>
<evidence type="ECO:0007829" key="3">
    <source>
        <dbReference type="PDB" id="1FAW"/>
    </source>
</evidence>